<reference key="1">
    <citation type="submission" date="2000-09" db="EMBL/GenBank/DDBJ databases">
        <title>Njmu-R1: a novel new gene related to spermatogenesis.</title>
        <authorList>
            <person name="Li J.M."/>
            <person name="Sha J.H."/>
            <person name="Zhou Z.M."/>
        </authorList>
    </citation>
    <scope>NUCLEOTIDE SEQUENCE [MRNA]</scope>
    <source>
        <tissue>Testis</tissue>
    </source>
</reference>
<reference key="2">
    <citation type="journal article" date="2004" name="Genome Res.">
        <title>The status, quality, and expansion of the NIH full-length cDNA project: the Mammalian Gene Collection (MGC).</title>
        <authorList>
            <consortium name="The MGC Project Team"/>
        </authorList>
    </citation>
    <scope>NUCLEOTIDE SEQUENCE [LARGE SCALE MRNA]</scope>
    <source>
        <tissue>Eye</tissue>
        <tissue>Ovary</tissue>
    </source>
</reference>
<reference key="3">
    <citation type="journal article" date="2008" name="Proc. Natl. Acad. Sci. U.S.A.">
        <title>A quantitative atlas of mitotic phosphorylation.</title>
        <authorList>
            <person name="Dephoure N."/>
            <person name="Zhou C."/>
            <person name="Villen J."/>
            <person name="Beausoleil S.A."/>
            <person name="Bakalarski C.E."/>
            <person name="Elledge S.J."/>
            <person name="Gygi S.P."/>
        </authorList>
    </citation>
    <scope>IDENTIFICATION BY MASS SPECTROMETRY [LARGE SCALE ANALYSIS]</scope>
    <source>
        <tissue>Cervix carcinoma</tissue>
    </source>
</reference>
<reference key="4">
    <citation type="journal article" date="2009" name="Anal. Chem.">
        <title>Lys-N and trypsin cover complementary parts of the phosphoproteome in a refined SCX-based approach.</title>
        <authorList>
            <person name="Gauci S."/>
            <person name="Helbig A.O."/>
            <person name="Slijper M."/>
            <person name="Krijgsveld J."/>
            <person name="Heck A.J."/>
            <person name="Mohammed S."/>
        </authorList>
    </citation>
    <scope>IDENTIFICATION BY MASS SPECTROMETRY [LARGE SCALE ANALYSIS]</scope>
</reference>
<reference key="5">
    <citation type="journal article" date="2009" name="Sci. Signal.">
        <title>Quantitative phosphoproteomic analysis of T cell receptor signaling reveals system-wide modulation of protein-protein interactions.</title>
        <authorList>
            <person name="Mayya V."/>
            <person name="Lundgren D.H."/>
            <person name="Hwang S.-I."/>
            <person name="Rezaul K."/>
            <person name="Wu L."/>
            <person name="Eng J.K."/>
            <person name="Rodionov V."/>
            <person name="Han D.K."/>
        </authorList>
    </citation>
    <scope>IDENTIFICATION BY MASS SPECTROMETRY [LARGE SCALE ANALYSIS]</scope>
    <source>
        <tissue>Leukemic T-cell</tissue>
    </source>
</reference>
<reference key="6">
    <citation type="journal article" date="2011" name="BMC Syst. Biol.">
        <title>Initial characterization of the human central proteome.</title>
        <authorList>
            <person name="Burkard T.R."/>
            <person name="Planyavsky M."/>
            <person name="Kaupe I."/>
            <person name="Breitwieser F.P."/>
            <person name="Buerckstuemmer T."/>
            <person name="Bennett K.L."/>
            <person name="Superti-Furga G."/>
            <person name="Colinge J."/>
        </authorList>
    </citation>
    <scope>IDENTIFICATION BY MASS SPECTROMETRY [LARGE SCALE ANALYSIS]</scope>
</reference>
<reference key="7">
    <citation type="journal article" date="2012" name="Proc. Natl. Acad. Sci. U.S.A.">
        <title>N-terminal acetylome analyses and functional insights of the N-terminal acetyltransferase NatB.</title>
        <authorList>
            <person name="Van Damme P."/>
            <person name="Lasa M."/>
            <person name="Polevoda B."/>
            <person name="Gazquez C."/>
            <person name="Elosegui-Artola A."/>
            <person name="Kim D.S."/>
            <person name="De Juan-Pardo E."/>
            <person name="Demeyer K."/>
            <person name="Hole K."/>
            <person name="Larrea E."/>
            <person name="Timmerman E."/>
            <person name="Prieto J."/>
            <person name="Arnesen T."/>
            <person name="Sherman F."/>
            <person name="Gevaert K."/>
            <person name="Aldabe R."/>
        </authorList>
    </citation>
    <scope>IDENTIFICATION BY MASS SPECTROMETRY [LARGE SCALE ANALYSIS]</scope>
</reference>
<reference key="8">
    <citation type="journal article" date="2013" name="J. Proteome Res.">
        <title>Toward a comprehensive characterization of a human cancer cell phosphoproteome.</title>
        <authorList>
            <person name="Zhou H."/>
            <person name="Di Palma S."/>
            <person name="Preisinger C."/>
            <person name="Peng M."/>
            <person name="Polat A.N."/>
            <person name="Heck A.J."/>
            <person name="Mohammed S."/>
        </authorList>
    </citation>
    <scope>PHOSPHORYLATION [LARGE SCALE ANALYSIS] AT SER-8</scope>
    <scope>IDENTIFICATION BY MASS SPECTROMETRY [LARGE SCALE ANALYSIS]</scope>
    <source>
        <tissue>Cervix carcinoma</tissue>
        <tissue>Erythroleukemia</tissue>
    </source>
</reference>
<reference key="9">
    <citation type="journal article" date="2014" name="J. Proteomics">
        <title>An enzyme assisted RP-RPLC approach for in-depth analysis of human liver phosphoproteome.</title>
        <authorList>
            <person name="Bian Y."/>
            <person name="Song C."/>
            <person name="Cheng K."/>
            <person name="Dong M."/>
            <person name="Wang F."/>
            <person name="Huang J."/>
            <person name="Sun D."/>
            <person name="Wang L."/>
            <person name="Ye M."/>
            <person name="Zou H."/>
        </authorList>
    </citation>
    <scope>PHOSPHORYLATION [LARGE SCALE ANALYSIS] AT SER-18</scope>
    <scope>IDENTIFICATION BY MASS SPECTROMETRY [LARGE SCALE ANALYSIS]</scope>
    <source>
        <tissue>Liver</tissue>
    </source>
</reference>
<reference key="10">
    <citation type="journal article" date="2017" name="Nat. Cell Biol.">
        <title>TBC1D23 is a bridging factor for endosomal vesicle capture by golgins at the trans-Golgi.</title>
        <authorList>
            <person name="Shin J.J.H."/>
            <person name="Gillingham A.K."/>
            <person name="Begum F."/>
            <person name="Chadwick J."/>
            <person name="Munro S."/>
        </authorList>
    </citation>
    <scope>INTERACTION WITH TBC1D23</scope>
</reference>
<reference key="11">
    <citation type="journal article" date="2018" name="Nat. Commun.">
        <title>The WDR11 complex facilitates the tethering of AP-1-derived vesicles.</title>
        <authorList>
            <person name="Navarro Negredo P."/>
            <person name="Edgar J.R."/>
            <person name="Manna P.T."/>
            <person name="Antrobus R."/>
            <person name="Robinson M.S."/>
        </authorList>
    </citation>
    <scope>FUNCTION</scope>
    <scope>SUBCELLULAR LOCATION</scope>
    <scope>IDENTIFICATION IN A COMPLEX WITH FAM91A1 AND WDR11</scope>
    <scope>INTERACTION WITH TBC1D23</scope>
</reference>
<name>NJMU_HUMAN</name>
<organism>
    <name type="scientific">Homo sapiens</name>
    <name type="common">Human</name>
    <dbReference type="NCBI Taxonomy" id="9606"/>
    <lineage>
        <taxon>Eukaryota</taxon>
        <taxon>Metazoa</taxon>
        <taxon>Chordata</taxon>
        <taxon>Craniata</taxon>
        <taxon>Vertebrata</taxon>
        <taxon>Euteleostomi</taxon>
        <taxon>Mammalia</taxon>
        <taxon>Eutheria</taxon>
        <taxon>Euarchontoglires</taxon>
        <taxon>Primates</taxon>
        <taxon>Haplorrhini</taxon>
        <taxon>Catarrhini</taxon>
        <taxon>Hominidae</taxon>
        <taxon>Homo</taxon>
    </lineage>
</organism>
<keyword id="KW-0968">Cytoplasmic vesicle</keyword>
<keyword id="KW-0333">Golgi apparatus</keyword>
<keyword id="KW-0597">Phosphoprotein</keyword>
<keyword id="KW-1267">Proteomics identification</keyword>
<keyword id="KW-1185">Reference proteome</keyword>
<evidence type="ECO:0000256" key="1">
    <source>
        <dbReference type="SAM" id="MobiDB-lite"/>
    </source>
</evidence>
<evidence type="ECO:0000269" key="2">
    <source>
    </source>
</evidence>
<evidence type="ECO:0000269" key="3">
    <source>
    </source>
</evidence>
<evidence type="ECO:0000305" key="4"/>
<evidence type="ECO:0007744" key="5">
    <source>
    </source>
</evidence>
<evidence type="ECO:0007744" key="6">
    <source>
    </source>
</evidence>
<accession>Q9HAS0</accession>
<accession>Q7Z2H4</accession>
<proteinExistence type="evidence at protein level"/>
<sequence>MLPSLQESMDGDEKELESSEEGGSAEERRLEPPSSSHYCLYSYRGSRLAQQRGDSEDGSPSGTNAETPSGDDFSLSLADTNLPSEVEPELRSFIAKRLSRGAVFEGLGNVASVELKIPGYRVGCYYCLFQNEKLLPETVTIDSERNPSEYVVCFLGGSEKGLELFRLELDKYIQGLKNNMNCEARGLESHIKSYLSSWFEDVVCPIQRVVLLFQEKLTFLLHAALSYTPVEVKESDEKTKRDINRFLSVASLQGLIHEGTMTSLCMAMTEEQHKSVVIDCSSSQPQFCNAGSNRFCEDWMQAFLNGAKGGNPFLFRQVLENFKLKAIQDTNNLKRFIRQAEMNHYALFKCYMFLKNCGSGDILLKIVKVEHEEMPEAKNVIAVLEEFMKEALDQSF</sequence>
<feature type="chain" id="PRO_0000096865" description="Protein Njmu-R1">
    <location>
        <begin position="1"/>
        <end position="396"/>
    </location>
</feature>
<feature type="region of interest" description="Disordered" evidence="1">
    <location>
        <begin position="1"/>
        <end position="78"/>
    </location>
</feature>
<feature type="compositionally biased region" description="Acidic residues" evidence="1">
    <location>
        <begin position="9"/>
        <end position="24"/>
    </location>
</feature>
<feature type="compositionally biased region" description="Polar residues" evidence="1">
    <location>
        <begin position="58"/>
        <end position="67"/>
    </location>
</feature>
<feature type="modified residue" description="Phosphoserine" evidence="5">
    <location>
        <position position="8"/>
    </location>
</feature>
<feature type="modified residue" description="Phosphoserine" evidence="6">
    <location>
        <position position="18"/>
    </location>
</feature>
<feature type="sequence conflict" description="In Ref. 1; AAG23214." evidence="4" ref="1">
    <original>L</original>
    <variation>F</variation>
    <location>
        <position position="314"/>
    </location>
</feature>
<dbReference type="EMBL" id="AF305686">
    <property type="protein sequence ID" value="AAG23214.1"/>
    <property type="status" value="ALT_FRAME"/>
    <property type="molecule type" value="mRNA"/>
</dbReference>
<dbReference type="EMBL" id="BC026017">
    <property type="protein sequence ID" value="AAH26017.1"/>
    <property type="molecule type" value="mRNA"/>
</dbReference>
<dbReference type="EMBL" id="BC035715">
    <property type="protein sequence ID" value="AAH35715.1"/>
    <property type="molecule type" value="mRNA"/>
</dbReference>
<dbReference type="EMBL" id="BC047325">
    <property type="protein sequence ID" value="AAH47325.1"/>
    <property type="molecule type" value="mRNA"/>
</dbReference>
<dbReference type="EMBL" id="BC054035">
    <property type="protein sequence ID" value="AAH54035.1"/>
    <property type="molecule type" value="mRNA"/>
</dbReference>
<dbReference type="CCDS" id="CCDS58537.1"/>
<dbReference type="RefSeq" id="NP_071739.2">
    <property type="nucleotide sequence ID" value="NM_022344.3"/>
</dbReference>
<dbReference type="BioGRID" id="122087">
    <property type="interactions" value="63"/>
</dbReference>
<dbReference type="CORUM" id="Q9HAS0"/>
<dbReference type="FunCoup" id="Q9HAS0">
    <property type="interactions" value="1423"/>
</dbReference>
<dbReference type="IntAct" id="Q9HAS0">
    <property type="interactions" value="34"/>
</dbReference>
<dbReference type="STRING" id="9606.ENSP00000464275"/>
<dbReference type="GlyGen" id="Q9HAS0">
    <property type="glycosylation" value="1 site, 1 O-linked glycan (1 site)"/>
</dbReference>
<dbReference type="iPTMnet" id="Q9HAS0"/>
<dbReference type="PhosphoSitePlus" id="Q9HAS0"/>
<dbReference type="BioMuta" id="C17orf75"/>
<dbReference type="DMDM" id="114152850"/>
<dbReference type="jPOST" id="Q9HAS0"/>
<dbReference type="MassIVE" id="Q9HAS0"/>
<dbReference type="PaxDb" id="9606-ENSP00000464275"/>
<dbReference type="PeptideAtlas" id="Q9HAS0"/>
<dbReference type="ProteomicsDB" id="81423"/>
<dbReference type="Pumba" id="Q9HAS0"/>
<dbReference type="Antibodypedia" id="1366">
    <property type="antibodies" value="184 antibodies from 21 providers"/>
</dbReference>
<dbReference type="DNASU" id="64149"/>
<dbReference type="Ensembl" id="ENST00000577809.6">
    <property type="protein sequence ID" value="ENSP00000464275.1"/>
    <property type="gene ID" value="ENSG00000108666.11"/>
</dbReference>
<dbReference type="GeneID" id="64149"/>
<dbReference type="KEGG" id="hsa:64149"/>
<dbReference type="MANE-Select" id="ENST00000577809.6">
    <property type="protein sequence ID" value="ENSP00000464275.1"/>
    <property type="RefSeq nucleotide sequence ID" value="NM_022344.4"/>
    <property type="RefSeq protein sequence ID" value="NP_071739.2"/>
</dbReference>
<dbReference type="UCSC" id="uc002hhg.4">
    <property type="organism name" value="human"/>
</dbReference>
<dbReference type="AGR" id="HGNC:30173"/>
<dbReference type="CTD" id="64149"/>
<dbReference type="GeneCards" id="C17orf75"/>
<dbReference type="HGNC" id="HGNC:30173">
    <property type="gene designation" value="C17orf75"/>
</dbReference>
<dbReference type="HPA" id="ENSG00000108666">
    <property type="expression patterns" value="Low tissue specificity"/>
</dbReference>
<dbReference type="neXtProt" id="NX_Q9HAS0"/>
<dbReference type="OpenTargets" id="ENSG00000108666"/>
<dbReference type="PharmGKB" id="PA142672223"/>
<dbReference type="VEuPathDB" id="HostDB:ENSG00000108666"/>
<dbReference type="eggNOG" id="ENOG502QRCR">
    <property type="taxonomic scope" value="Eukaryota"/>
</dbReference>
<dbReference type="GeneTree" id="ENSGT00390000005481"/>
<dbReference type="InParanoid" id="Q9HAS0"/>
<dbReference type="OMA" id="FEDAICP"/>
<dbReference type="OrthoDB" id="20238at2759"/>
<dbReference type="PAN-GO" id="Q9HAS0">
    <property type="GO annotations" value="2 GO annotations based on evolutionary models"/>
</dbReference>
<dbReference type="PhylomeDB" id="Q9HAS0"/>
<dbReference type="TreeFam" id="TF330763"/>
<dbReference type="PathwayCommons" id="Q9HAS0"/>
<dbReference type="SignaLink" id="Q9HAS0"/>
<dbReference type="BioGRID-ORCS" id="64149">
    <property type="hits" value="26 hits in 1132 CRISPR screens"/>
</dbReference>
<dbReference type="ChiTaRS" id="C17orf75">
    <property type="organism name" value="human"/>
</dbReference>
<dbReference type="GenomeRNAi" id="64149"/>
<dbReference type="Pharos" id="Q9HAS0">
    <property type="development level" value="Tbio"/>
</dbReference>
<dbReference type="PRO" id="PR:Q9HAS0"/>
<dbReference type="Proteomes" id="UP000005640">
    <property type="component" value="Chromosome 17"/>
</dbReference>
<dbReference type="RNAct" id="Q9HAS0">
    <property type="molecule type" value="protein"/>
</dbReference>
<dbReference type="Bgee" id="ENSG00000108666">
    <property type="expression patterns" value="Expressed in right testis and 169 other cell types or tissues"/>
</dbReference>
<dbReference type="ExpressionAtlas" id="Q9HAS0">
    <property type="expression patterns" value="baseline and differential"/>
</dbReference>
<dbReference type="GO" id="GO:0031410">
    <property type="term" value="C:cytoplasmic vesicle"/>
    <property type="evidence" value="ECO:0000314"/>
    <property type="project" value="UniProtKB"/>
</dbReference>
<dbReference type="GO" id="GO:0005829">
    <property type="term" value="C:cytosol"/>
    <property type="evidence" value="ECO:0000314"/>
    <property type="project" value="HPA"/>
</dbReference>
<dbReference type="GO" id="GO:0005794">
    <property type="term" value="C:Golgi apparatus"/>
    <property type="evidence" value="ECO:0000314"/>
    <property type="project" value="HPA"/>
</dbReference>
<dbReference type="GO" id="GO:0005802">
    <property type="term" value="C:trans-Golgi network"/>
    <property type="evidence" value="ECO:0000314"/>
    <property type="project" value="UniProtKB"/>
</dbReference>
<dbReference type="GO" id="GO:0006886">
    <property type="term" value="P:intracellular protein transport"/>
    <property type="evidence" value="ECO:0000314"/>
    <property type="project" value="UniProtKB"/>
</dbReference>
<dbReference type="GO" id="GO:0099041">
    <property type="term" value="P:vesicle tethering to Golgi"/>
    <property type="evidence" value="ECO:0000314"/>
    <property type="project" value="UniProtKB"/>
</dbReference>
<dbReference type="InterPro" id="IPR028280">
    <property type="entry name" value="Njmu-R1"/>
</dbReference>
<dbReference type="PANTHER" id="PTHR14416">
    <property type="entry name" value="PROTEIN NJMU-R1"/>
    <property type="match status" value="1"/>
</dbReference>
<dbReference type="PANTHER" id="PTHR14416:SF2">
    <property type="entry name" value="PROTEIN NJMU-R1"/>
    <property type="match status" value="1"/>
</dbReference>
<dbReference type="Pfam" id="PF15053">
    <property type="entry name" value="Njmu-R1"/>
    <property type="match status" value="1"/>
</dbReference>
<comment type="function">
    <text evidence="3">As component of the WDR11 complex acts together with TBC1D23 to facilitate the golgin-mediated capture of vesicles generated using AP-1 (PubMed:29426865). May have a role in spermatogenesis.</text>
</comment>
<comment type="subunit">
    <text evidence="2 3">Component of the complex WDR11 composed of C17orf75, FAM91A1 and WDR11; FAM91A1 and WDR11 are required for proper location of the complex (PubMed:29426865). Interacts with TBC1D23; this interaction may be indirect and recruits TBC1D23 to AP-1-derived vesicles (PubMed:29084197, PubMed:29426865).</text>
</comment>
<comment type="interaction">
    <interactant intactId="EBI-12954949">
        <id>Q9HAS0</id>
    </interactant>
    <interactant intactId="EBI-350590">
        <id>Q9UNS2</id>
        <label>COPS3</label>
    </interactant>
    <organismsDiffer>false</organismsDiffer>
    <experiments>3</experiments>
</comment>
<comment type="interaction">
    <interactant intactId="EBI-12954949">
        <id>Q9HAS0</id>
    </interactant>
    <interactant intactId="EBI-1054321">
        <id>Q68J44</id>
        <label>DUSP29</label>
    </interactant>
    <organismsDiffer>false</organismsDiffer>
    <experiments>3</experiments>
</comment>
<comment type="interaction">
    <interactant intactId="EBI-12954949">
        <id>Q9HAS0</id>
    </interactant>
    <interactant intactId="EBI-6165891">
        <id>Q14696</id>
        <label>MESD</label>
    </interactant>
    <organismsDiffer>false</organismsDiffer>
    <experiments>3</experiments>
</comment>
<comment type="subcellular location">
    <subcellularLocation>
        <location evidence="3">Golgi apparatus</location>
        <location evidence="3">trans-Golgi network</location>
    </subcellularLocation>
    <subcellularLocation>
        <location evidence="3">Cytoplasmic vesicle</location>
    </subcellularLocation>
</comment>
<comment type="tissue specificity">
    <text>Highly expressed in testis and also expressed in fetal testis.</text>
</comment>
<comment type="sequence caution" evidence="4">
    <conflict type="frameshift">
        <sequence resource="EMBL-CDS" id="AAG23214"/>
    </conflict>
</comment>
<protein>
    <recommendedName>
        <fullName>Protein Njmu-R1</fullName>
    </recommendedName>
</protein>
<gene>
    <name type="primary">C17orf75</name>
</gene>